<keyword id="KW-0378">Hydrolase</keyword>
<keyword id="KW-0645">Protease</keyword>
<keyword id="KW-0964">Secreted</keyword>
<keyword id="KW-0720">Serine protease</keyword>
<keyword id="KW-0732">Signal</keyword>
<reference key="1">
    <citation type="journal article" date="2006" name="Lancet">
        <title>Complete genome sequence of USA300, an epidemic clone of community-acquired meticillin-resistant Staphylococcus aureus.</title>
        <authorList>
            <person name="Diep B.A."/>
            <person name="Gill S.R."/>
            <person name="Chang R.F."/>
            <person name="Phan T.H."/>
            <person name="Chen J.H."/>
            <person name="Davidson M.G."/>
            <person name="Lin F."/>
            <person name="Lin J."/>
            <person name="Carleton H.A."/>
            <person name="Mongodin E.F."/>
            <person name="Sensabaugh G.F."/>
            <person name="Perdreau-Remington F."/>
        </authorList>
    </citation>
    <scope>NUCLEOTIDE SEQUENCE [LARGE SCALE GENOMIC DNA]</scope>
    <source>
        <strain>USA300</strain>
    </source>
</reference>
<organism>
    <name type="scientific">Staphylococcus aureus (strain USA300)</name>
    <dbReference type="NCBI Taxonomy" id="367830"/>
    <lineage>
        <taxon>Bacteria</taxon>
        <taxon>Bacillati</taxon>
        <taxon>Bacillota</taxon>
        <taxon>Bacilli</taxon>
        <taxon>Bacillales</taxon>
        <taxon>Staphylococcaceae</taxon>
        <taxon>Staphylococcus</taxon>
    </lineage>
</organism>
<name>SPLA_STAA3</name>
<evidence type="ECO:0000250" key="1"/>
<evidence type="ECO:0000305" key="2"/>
<feature type="signal peptide" evidence="1">
    <location>
        <begin position="1"/>
        <end position="35"/>
    </location>
</feature>
<feature type="chain" id="PRO_0000359536" description="Serine protease SplA">
    <location>
        <begin position="36"/>
        <end position="235"/>
    </location>
</feature>
<feature type="active site" description="Charge relay system" evidence="1">
    <location>
        <position position="74"/>
    </location>
</feature>
<feature type="active site" description="Charge relay system" evidence="1">
    <location>
        <position position="113"/>
    </location>
</feature>
<feature type="active site" description="Charge relay system" evidence="1">
    <location>
        <position position="189"/>
    </location>
</feature>
<proteinExistence type="inferred from homology"/>
<gene>
    <name type="primary">splA</name>
    <name type="ordered locus">SAUSA300_1758</name>
</gene>
<dbReference type="EC" id="3.4.21.-"/>
<dbReference type="EMBL" id="CP000255">
    <property type="protein sequence ID" value="ABD21885.1"/>
    <property type="molecule type" value="Genomic_DNA"/>
</dbReference>
<dbReference type="RefSeq" id="WP_001039435.1">
    <property type="nucleotide sequence ID" value="NZ_CP027476.1"/>
</dbReference>
<dbReference type="SMR" id="Q2FFS9"/>
<dbReference type="MEROPS" id="S01.503"/>
<dbReference type="KEGG" id="saa:SAUSA300_1758"/>
<dbReference type="HOGENOM" id="CLU_073589_2_0_9"/>
<dbReference type="OMA" id="YNAQFEV"/>
<dbReference type="Proteomes" id="UP000001939">
    <property type="component" value="Chromosome"/>
</dbReference>
<dbReference type="GO" id="GO:0005576">
    <property type="term" value="C:extracellular region"/>
    <property type="evidence" value="ECO:0007669"/>
    <property type="project" value="UniProtKB-SubCell"/>
</dbReference>
<dbReference type="GO" id="GO:0004252">
    <property type="term" value="F:serine-type endopeptidase activity"/>
    <property type="evidence" value="ECO:0007669"/>
    <property type="project" value="InterPro"/>
</dbReference>
<dbReference type="GO" id="GO:0006508">
    <property type="term" value="P:proteolysis"/>
    <property type="evidence" value="ECO:0007669"/>
    <property type="project" value="UniProtKB-KW"/>
</dbReference>
<dbReference type="Gene3D" id="2.40.10.10">
    <property type="entry name" value="Trypsin-like serine proteases"/>
    <property type="match status" value="2"/>
</dbReference>
<dbReference type="InterPro" id="IPR009003">
    <property type="entry name" value="Peptidase_S1_PA"/>
</dbReference>
<dbReference type="InterPro" id="IPR043504">
    <property type="entry name" value="Peptidase_S1_PA_chymotrypsin"/>
</dbReference>
<dbReference type="InterPro" id="IPR008256">
    <property type="entry name" value="Peptidase_S1B"/>
</dbReference>
<dbReference type="InterPro" id="IPR008353">
    <property type="entry name" value="Peptidase_S1B_tx"/>
</dbReference>
<dbReference type="InterPro" id="IPR001254">
    <property type="entry name" value="Trypsin_dom"/>
</dbReference>
<dbReference type="InterPro" id="IPR028301">
    <property type="entry name" value="V8_his_AS"/>
</dbReference>
<dbReference type="PANTHER" id="PTHR43019:SF23">
    <property type="entry name" value="PROTEASE DO-LIKE 5, CHLOROPLASTIC"/>
    <property type="match status" value="1"/>
</dbReference>
<dbReference type="PANTHER" id="PTHR43019">
    <property type="entry name" value="SERINE ENDOPROTEASE DEGS"/>
    <property type="match status" value="1"/>
</dbReference>
<dbReference type="Pfam" id="PF00089">
    <property type="entry name" value="Trypsin"/>
    <property type="match status" value="1"/>
</dbReference>
<dbReference type="PRINTS" id="PR01774">
    <property type="entry name" value="EXFOLTOXIN"/>
</dbReference>
<dbReference type="PRINTS" id="PR00839">
    <property type="entry name" value="V8PROTEASE"/>
</dbReference>
<dbReference type="SUPFAM" id="SSF50494">
    <property type="entry name" value="Trypsin-like serine proteases"/>
    <property type="match status" value="1"/>
</dbReference>
<dbReference type="PROSITE" id="PS00672">
    <property type="entry name" value="V8_HIS"/>
    <property type="match status" value="1"/>
</dbReference>
<accession>Q2FFS9</accession>
<protein>
    <recommendedName>
        <fullName>Serine protease SplA</fullName>
        <ecNumber>3.4.21.-</ecNumber>
    </recommendedName>
</protein>
<sequence>MNKNVMVKGLTALTILTSLGFAENISNQPHSIAKAEKNVKEITDATKEPYNSVVAFVGGTGVVVGKNTIVTNKHIAKSNDIFKNRVSAHHSSKGKGGGNYDVKDIVEYPGKEDLAIVHVHETSTEGLNFNKNVSYTKFADGAKVKDRISVIGYPKGAQTKYKMFESTGTINHISGTFMEFDAYAQPGNSGSPVLNSKHELIGILYAGSGKDESEKNFGVYFTPQLKEFIQNNIEK</sequence>
<comment type="subcellular location">
    <subcellularLocation>
        <location evidence="1">Secreted</location>
    </subcellularLocation>
</comment>
<comment type="similarity">
    <text evidence="2">Belongs to the peptidase S1B family.</text>
</comment>